<evidence type="ECO:0000255" key="1">
    <source>
        <dbReference type="HAMAP-Rule" id="MF_01310"/>
    </source>
</evidence>
<evidence type="ECO:0000305" key="2"/>
<keyword id="KW-1185">Reference proteome</keyword>
<keyword id="KW-0687">Ribonucleoprotein</keyword>
<keyword id="KW-0689">Ribosomal protein</keyword>
<keyword id="KW-0694">RNA-binding</keyword>
<keyword id="KW-0699">rRNA-binding</keyword>
<protein>
    <recommendedName>
        <fullName evidence="1">Small ribosomal subunit protein uS11</fullName>
    </recommendedName>
    <alternativeName>
        <fullName evidence="2">30S ribosomal protein S11</fullName>
    </alternativeName>
</protein>
<name>RS11_ANADE</name>
<gene>
    <name evidence="1" type="primary">rpsK</name>
    <name type="ordered locus">Adeh_1921</name>
</gene>
<accession>Q2IJ64</accession>
<feature type="chain" id="PRO_0000294711" description="Small ribosomal subunit protein uS11">
    <location>
        <begin position="1"/>
        <end position="127"/>
    </location>
</feature>
<proteinExistence type="inferred from homology"/>
<comment type="function">
    <text evidence="1">Located on the platform of the 30S subunit, it bridges several disparate RNA helices of the 16S rRNA. Forms part of the Shine-Dalgarno cleft in the 70S ribosome.</text>
</comment>
<comment type="subunit">
    <text evidence="1">Part of the 30S ribosomal subunit. Interacts with proteins S7 and S18. Binds to IF-3.</text>
</comment>
<comment type="similarity">
    <text evidence="1">Belongs to the universal ribosomal protein uS11 family.</text>
</comment>
<reference key="1">
    <citation type="submission" date="2006-01" db="EMBL/GenBank/DDBJ databases">
        <title>Complete sequence of Anaeromyxobacter dehalogenans 2CP-C.</title>
        <authorList>
            <person name="Copeland A."/>
            <person name="Lucas S."/>
            <person name="Lapidus A."/>
            <person name="Barry K."/>
            <person name="Detter J.C."/>
            <person name="Glavina T."/>
            <person name="Hammon N."/>
            <person name="Israni S."/>
            <person name="Pitluck S."/>
            <person name="Brettin T."/>
            <person name="Bruce D."/>
            <person name="Han C."/>
            <person name="Tapia R."/>
            <person name="Gilna P."/>
            <person name="Kiss H."/>
            <person name="Schmutz J."/>
            <person name="Larimer F."/>
            <person name="Land M."/>
            <person name="Kyrpides N."/>
            <person name="Anderson I."/>
            <person name="Sanford R.A."/>
            <person name="Ritalahti K.M."/>
            <person name="Thomas H.S."/>
            <person name="Kirby J.R."/>
            <person name="Zhulin I.B."/>
            <person name="Loeffler F.E."/>
            <person name="Richardson P."/>
        </authorList>
    </citation>
    <scope>NUCLEOTIDE SEQUENCE [LARGE SCALE GENOMIC DNA]</scope>
    <source>
        <strain>2CP-C</strain>
    </source>
</reference>
<organism>
    <name type="scientific">Anaeromyxobacter dehalogenans (strain 2CP-C)</name>
    <dbReference type="NCBI Taxonomy" id="290397"/>
    <lineage>
        <taxon>Bacteria</taxon>
        <taxon>Pseudomonadati</taxon>
        <taxon>Myxococcota</taxon>
        <taxon>Myxococcia</taxon>
        <taxon>Myxococcales</taxon>
        <taxon>Cystobacterineae</taxon>
        <taxon>Anaeromyxobacteraceae</taxon>
        <taxon>Anaeromyxobacter</taxon>
    </lineage>
</organism>
<dbReference type="EMBL" id="CP000251">
    <property type="protein sequence ID" value="ABC81692.1"/>
    <property type="molecule type" value="Genomic_DNA"/>
</dbReference>
<dbReference type="SMR" id="Q2IJ64"/>
<dbReference type="STRING" id="290397.Adeh_1921"/>
<dbReference type="KEGG" id="ade:Adeh_1921"/>
<dbReference type="eggNOG" id="COG0100">
    <property type="taxonomic scope" value="Bacteria"/>
</dbReference>
<dbReference type="HOGENOM" id="CLU_072439_5_0_7"/>
<dbReference type="Proteomes" id="UP000001935">
    <property type="component" value="Chromosome"/>
</dbReference>
<dbReference type="GO" id="GO:1990904">
    <property type="term" value="C:ribonucleoprotein complex"/>
    <property type="evidence" value="ECO:0007669"/>
    <property type="project" value="UniProtKB-KW"/>
</dbReference>
<dbReference type="GO" id="GO:0005840">
    <property type="term" value="C:ribosome"/>
    <property type="evidence" value="ECO:0007669"/>
    <property type="project" value="UniProtKB-KW"/>
</dbReference>
<dbReference type="GO" id="GO:0019843">
    <property type="term" value="F:rRNA binding"/>
    <property type="evidence" value="ECO:0007669"/>
    <property type="project" value="UniProtKB-UniRule"/>
</dbReference>
<dbReference type="GO" id="GO:0003735">
    <property type="term" value="F:structural constituent of ribosome"/>
    <property type="evidence" value="ECO:0007669"/>
    <property type="project" value="InterPro"/>
</dbReference>
<dbReference type="GO" id="GO:0006412">
    <property type="term" value="P:translation"/>
    <property type="evidence" value="ECO:0007669"/>
    <property type="project" value="UniProtKB-UniRule"/>
</dbReference>
<dbReference type="FunFam" id="3.30.420.80:FF:000001">
    <property type="entry name" value="30S ribosomal protein S11"/>
    <property type="match status" value="1"/>
</dbReference>
<dbReference type="Gene3D" id="3.30.420.80">
    <property type="entry name" value="Ribosomal protein S11"/>
    <property type="match status" value="1"/>
</dbReference>
<dbReference type="HAMAP" id="MF_01310">
    <property type="entry name" value="Ribosomal_uS11"/>
    <property type="match status" value="1"/>
</dbReference>
<dbReference type="InterPro" id="IPR001971">
    <property type="entry name" value="Ribosomal_uS11"/>
</dbReference>
<dbReference type="InterPro" id="IPR019981">
    <property type="entry name" value="Ribosomal_uS11_bac-type"/>
</dbReference>
<dbReference type="InterPro" id="IPR018102">
    <property type="entry name" value="Ribosomal_uS11_CS"/>
</dbReference>
<dbReference type="InterPro" id="IPR036967">
    <property type="entry name" value="Ribosomal_uS11_sf"/>
</dbReference>
<dbReference type="NCBIfam" id="NF003698">
    <property type="entry name" value="PRK05309.1"/>
    <property type="match status" value="1"/>
</dbReference>
<dbReference type="NCBIfam" id="TIGR03632">
    <property type="entry name" value="uS11_bact"/>
    <property type="match status" value="1"/>
</dbReference>
<dbReference type="PANTHER" id="PTHR11759">
    <property type="entry name" value="40S RIBOSOMAL PROTEIN S14/30S RIBOSOMAL PROTEIN S11"/>
    <property type="match status" value="1"/>
</dbReference>
<dbReference type="Pfam" id="PF00411">
    <property type="entry name" value="Ribosomal_S11"/>
    <property type="match status" value="1"/>
</dbReference>
<dbReference type="PIRSF" id="PIRSF002131">
    <property type="entry name" value="Ribosomal_S11"/>
    <property type="match status" value="1"/>
</dbReference>
<dbReference type="SUPFAM" id="SSF53137">
    <property type="entry name" value="Translational machinery components"/>
    <property type="match status" value="1"/>
</dbReference>
<dbReference type="PROSITE" id="PS00054">
    <property type="entry name" value="RIBOSOMAL_S11"/>
    <property type="match status" value="1"/>
</dbReference>
<sequence>MTPKKGKKRVKKNIAAGIVHIASTFNNTQITITDVTGNVIAWSSAGARGFKGSRKSTPFAAQVAAGDAAAKAMEHGLKTVSVVVKGPGAGRESALRALSAAGLKITLIRDVTPIPHNGCRPPKRRRV</sequence>